<sequence length="259" mass="27723">MMLGVIGGSGFYTFFGSDARAVSVETPYGPPSAPITVGTVGDHEVAFLPRHGVKHEFSPHTVPYRANLWALRSLGVRRVFAPCAVGSLTPDLGPGSIVVPDQLVDRTSGRDDTYFDSGGIHVAFADPYCPTLRAAATGLPGVVDGGTMVVIQGPRFSTRAESRWFASQGFTLVNMTGYPEAVLARELEMCYAAVALVTDLDAGIEVGSGVRAVDVFAEFERNMPPFKKLVFEALEAVEVERTCTHCLTHSGVQLPFELP</sequence>
<keyword id="KW-0328">Glycosyltransferase</keyword>
<keyword id="KW-0660">Purine salvage</keyword>
<keyword id="KW-1185">Reference proteome</keyword>
<keyword id="KW-0808">Transferase</keyword>
<feature type="chain" id="PRO_0000415095" description="S-methyl-5'-thioadenosine phosphorylase">
    <location>
        <begin position="1"/>
        <end position="259"/>
    </location>
</feature>
<feature type="binding site" evidence="1">
    <location>
        <position position="9"/>
    </location>
    <ligand>
        <name>phosphate</name>
        <dbReference type="ChEBI" id="CHEBI:43474"/>
    </ligand>
</feature>
<feature type="binding site" evidence="1">
    <location>
        <begin position="50"/>
        <end position="51"/>
    </location>
    <ligand>
        <name>phosphate</name>
        <dbReference type="ChEBI" id="CHEBI:43474"/>
    </ligand>
</feature>
<feature type="binding site" evidence="1">
    <location>
        <position position="175"/>
    </location>
    <ligand>
        <name>substrate</name>
    </ligand>
</feature>
<feature type="binding site" evidence="1">
    <location>
        <position position="176"/>
    </location>
    <ligand>
        <name>phosphate</name>
        <dbReference type="ChEBI" id="CHEBI:43474"/>
    </ligand>
</feature>
<feature type="binding site" evidence="1">
    <location>
        <begin position="199"/>
        <end position="201"/>
    </location>
    <ligand>
        <name>substrate</name>
    </ligand>
</feature>
<feature type="site" description="Important for substrate specificity" evidence="1">
    <location>
        <position position="157"/>
    </location>
</feature>
<feature type="site" description="Important for substrate specificity" evidence="1">
    <location>
        <position position="212"/>
    </location>
</feature>
<dbReference type="EC" id="2.4.2.28" evidence="1"/>
<dbReference type="EMBL" id="CP000480">
    <property type="protein sequence ID" value="ABK70512.1"/>
    <property type="molecule type" value="Genomic_DNA"/>
</dbReference>
<dbReference type="EMBL" id="CP001663">
    <property type="protein sequence ID" value="AFP37443.1"/>
    <property type="molecule type" value="Genomic_DNA"/>
</dbReference>
<dbReference type="RefSeq" id="WP_011727338.1">
    <property type="nucleotide sequence ID" value="NZ_SIJM01000010.1"/>
</dbReference>
<dbReference type="RefSeq" id="YP_885392.1">
    <property type="nucleotide sequence ID" value="NC_008596.1"/>
</dbReference>
<dbReference type="SMR" id="A0QR54"/>
<dbReference type="STRING" id="246196.MSMEG_0990"/>
<dbReference type="PaxDb" id="246196-MSMEI_0963"/>
<dbReference type="KEGG" id="msg:MSMEI_0963"/>
<dbReference type="KEGG" id="msm:MSMEG_0990"/>
<dbReference type="PATRIC" id="fig|246196.19.peg.978"/>
<dbReference type="eggNOG" id="COG0005">
    <property type="taxonomic scope" value="Bacteria"/>
</dbReference>
<dbReference type="OrthoDB" id="1523230at2"/>
<dbReference type="SABIO-RK" id="A0QR54"/>
<dbReference type="UniPathway" id="UPA00904">
    <property type="reaction ID" value="UER00873"/>
</dbReference>
<dbReference type="Proteomes" id="UP000000757">
    <property type="component" value="Chromosome"/>
</dbReference>
<dbReference type="Proteomes" id="UP000006158">
    <property type="component" value="Chromosome"/>
</dbReference>
<dbReference type="GO" id="GO:0005829">
    <property type="term" value="C:cytosol"/>
    <property type="evidence" value="ECO:0007669"/>
    <property type="project" value="TreeGrafter"/>
</dbReference>
<dbReference type="GO" id="GO:0017061">
    <property type="term" value="F:S-methyl-5-thioadenosine phosphorylase activity"/>
    <property type="evidence" value="ECO:0007669"/>
    <property type="project" value="UniProtKB-UniRule"/>
</dbReference>
<dbReference type="GO" id="GO:0019509">
    <property type="term" value="P:L-methionine salvage from methylthioadenosine"/>
    <property type="evidence" value="ECO:0007669"/>
    <property type="project" value="UniProtKB-UniRule"/>
</dbReference>
<dbReference type="GO" id="GO:0006166">
    <property type="term" value="P:purine ribonucleoside salvage"/>
    <property type="evidence" value="ECO:0007669"/>
    <property type="project" value="UniProtKB-KW"/>
</dbReference>
<dbReference type="CDD" id="cd09010">
    <property type="entry name" value="MTAP_SsMTAPII_like_MTIP"/>
    <property type="match status" value="1"/>
</dbReference>
<dbReference type="Gene3D" id="3.40.50.1580">
    <property type="entry name" value="Nucleoside phosphorylase domain"/>
    <property type="match status" value="1"/>
</dbReference>
<dbReference type="HAMAP" id="MF_01963">
    <property type="entry name" value="MTAP"/>
    <property type="match status" value="1"/>
</dbReference>
<dbReference type="InterPro" id="IPR010044">
    <property type="entry name" value="MTAP"/>
</dbReference>
<dbReference type="InterPro" id="IPR000845">
    <property type="entry name" value="Nucleoside_phosphorylase_d"/>
</dbReference>
<dbReference type="InterPro" id="IPR035994">
    <property type="entry name" value="Nucleoside_phosphorylase_sf"/>
</dbReference>
<dbReference type="NCBIfam" id="TIGR01694">
    <property type="entry name" value="MTAP"/>
    <property type="match status" value="1"/>
</dbReference>
<dbReference type="NCBIfam" id="NF005876">
    <property type="entry name" value="PRK07823.1"/>
    <property type="match status" value="1"/>
</dbReference>
<dbReference type="PANTHER" id="PTHR42679">
    <property type="entry name" value="S-METHYL-5'-THIOADENOSINE PHOSPHORYLASE"/>
    <property type="match status" value="1"/>
</dbReference>
<dbReference type="PANTHER" id="PTHR42679:SF2">
    <property type="entry name" value="S-METHYL-5'-THIOADENOSINE PHOSPHORYLASE"/>
    <property type="match status" value="1"/>
</dbReference>
<dbReference type="Pfam" id="PF01048">
    <property type="entry name" value="PNP_UDP_1"/>
    <property type="match status" value="1"/>
</dbReference>
<dbReference type="SUPFAM" id="SSF53167">
    <property type="entry name" value="Purine and uridine phosphorylases"/>
    <property type="match status" value="1"/>
</dbReference>
<reference key="1">
    <citation type="submission" date="2006-10" db="EMBL/GenBank/DDBJ databases">
        <authorList>
            <person name="Fleischmann R.D."/>
            <person name="Dodson R.J."/>
            <person name="Haft D.H."/>
            <person name="Merkel J.S."/>
            <person name="Nelson W.C."/>
            <person name="Fraser C.M."/>
        </authorList>
    </citation>
    <scope>NUCLEOTIDE SEQUENCE [LARGE SCALE GENOMIC DNA]</scope>
    <source>
        <strain>ATCC 700084 / mc(2)155</strain>
    </source>
</reference>
<reference key="2">
    <citation type="journal article" date="2007" name="Genome Biol.">
        <title>Interrupted coding sequences in Mycobacterium smegmatis: authentic mutations or sequencing errors?</title>
        <authorList>
            <person name="Deshayes C."/>
            <person name="Perrodou E."/>
            <person name="Gallien S."/>
            <person name="Euphrasie D."/>
            <person name="Schaeffer C."/>
            <person name="Van-Dorsselaer A."/>
            <person name="Poch O."/>
            <person name="Lecompte O."/>
            <person name="Reyrat J.-M."/>
        </authorList>
    </citation>
    <scope>NUCLEOTIDE SEQUENCE [LARGE SCALE GENOMIC DNA]</scope>
    <source>
        <strain>ATCC 700084 / mc(2)155</strain>
    </source>
</reference>
<reference key="3">
    <citation type="journal article" date="2009" name="Genome Res.">
        <title>Ortho-proteogenomics: multiple proteomes investigation through orthology and a new MS-based protocol.</title>
        <authorList>
            <person name="Gallien S."/>
            <person name="Perrodou E."/>
            <person name="Carapito C."/>
            <person name="Deshayes C."/>
            <person name="Reyrat J.-M."/>
            <person name="Van Dorsselaer A."/>
            <person name="Poch O."/>
            <person name="Schaeffer C."/>
            <person name="Lecompte O."/>
        </authorList>
    </citation>
    <scope>NUCLEOTIDE SEQUENCE [LARGE SCALE GENOMIC DNA]</scope>
    <source>
        <strain>ATCC 700084 / mc(2)155</strain>
    </source>
</reference>
<reference key="4">
    <citation type="journal article" date="2011" name="J. Bacteriol.">
        <title>Identification and characterization of two adenosine phosphorylase activities in Mycobacterium smegmatis.</title>
        <authorList>
            <person name="Buckoreelall K."/>
            <person name="Wilson L."/>
            <person name="Parker W.B."/>
        </authorList>
    </citation>
    <scope>BIOPHYSICOCHEMICAL PROPERTIES</scope>
    <source>
        <strain>ATCC 700084 / mc(2)155</strain>
    </source>
</reference>
<organism>
    <name type="scientific">Mycolicibacterium smegmatis (strain ATCC 700084 / mc(2)155)</name>
    <name type="common">Mycobacterium smegmatis</name>
    <dbReference type="NCBI Taxonomy" id="246196"/>
    <lineage>
        <taxon>Bacteria</taxon>
        <taxon>Bacillati</taxon>
        <taxon>Actinomycetota</taxon>
        <taxon>Actinomycetes</taxon>
        <taxon>Mycobacteriales</taxon>
        <taxon>Mycobacteriaceae</taxon>
        <taxon>Mycolicibacterium</taxon>
    </lineage>
</organism>
<proteinExistence type="evidence at protein level"/>
<gene>
    <name evidence="1" type="primary">mtnP</name>
    <name type="synonym">pnp</name>
    <name type="ordered locus">MSMEG_0990</name>
    <name type="ordered locus">MSMEI_0963</name>
</gene>
<evidence type="ECO:0000255" key="1">
    <source>
        <dbReference type="HAMAP-Rule" id="MF_01963"/>
    </source>
</evidence>
<evidence type="ECO:0000269" key="2">
    <source>
    </source>
</evidence>
<name>MTAP_MYCS2</name>
<protein>
    <recommendedName>
        <fullName evidence="1">S-methyl-5'-thioadenosine phosphorylase</fullName>
        <ecNumber evidence="1">2.4.2.28</ecNumber>
    </recommendedName>
    <alternativeName>
        <fullName evidence="1">5'-methylthioadenosine phosphorylase</fullName>
        <shortName evidence="1">MTA phosphorylase</shortName>
        <shortName evidence="1">MTAP</shortName>
    </alternativeName>
</protein>
<comment type="function">
    <text evidence="1">Catalyzes the reversible phosphorylation of S-methyl-5'-thioadenosine (MTA) to adenine and 5-methylthioribose-1-phosphate. Involved in the breakdown of MTA, a major by-product of polyamine biosynthesis. Responsible for the first step in the methionine salvage pathway after MTA has been generated from S-adenosylmethionine. Has broad substrate specificity with 6-aminopurine nucleosides as preferred substrates.</text>
</comment>
<comment type="catalytic activity">
    <reaction evidence="1">
        <text>S-methyl-5'-thioadenosine + phosphate = 5-(methylsulfanyl)-alpha-D-ribose 1-phosphate + adenine</text>
        <dbReference type="Rhea" id="RHEA:11852"/>
        <dbReference type="ChEBI" id="CHEBI:16708"/>
        <dbReference type="ChEBI" id="CHEBI:17509"/>
        <dbReference type="ChEBI" id="CHEBI:43474"/>
        <dbReference type="ChEBI" id="CHEBI:58533"/>
        <dbReference type="EC" id="2.4.2.28"/>
    </reaction>
</comment>
<comment type="biophysicochemical properties">
    <kinetics>
        <KM evidence="2">1.6 uM for S-methyl-5'-thioadenosine</KM>
        <KM evidence="2">310 uM for adenosine</KM>
    </kinetics>
</comment>
<comment type="pathway">
    <text evidence="1">Amino-acid biosynthesis; L-methionine biosynthesis via salvage pathway; S-methyl-5-thio-alpha-D-ribose 1-phosphate from S-methyl-5'-thioadenosine (phosphorylase route): step 1/1.</text>
</comment>
<comment type="subunit">
    <text evidence="1">Homohexamer. Dimer of a homotrimer.</text>
</comment>
<comment type="similarity">
    <text evidence="1">Belongs to the PNP/MTAP phosphorylase family. MTAP subfamily.</text>
</comment>
<accession>A0QR54</accession>
<accession>I7FF12</accession>